<keyword id="KW-1003">Cell membrane</keyword>
<keyword id="KW-0449">Lipoprotein</keyword>
<keyword id="KW-0472">Membrane</keyword>
<keyword id="KW-0564">Palmitate</keyword>
<keyword id="KW-1185">Reference proteome</keyword>
<keyword id="KW-0732">Signal</keyword>
<sequence>MPRLLILVAVLLLSGCLTAPPKQAAKPTLMPRAQSYKDLTHLPAPTGKIFVSVYNIQDETGQFKPYPASNFSTAVPQSATAMLVTALKDSRWFIPLERQGLQNLLNERKIIRAAQENGTVAMNNRIPLQSLTAANIMVEGSIIGYESNVKSGGVGARYFGIGADTQYQLDQIAVNLRVVNVSTGEILSSVNTSKTILSYEVQAGVFRFIDYQRLLEGEIGYTSNEPVMLCLMSAIETGVIFLINDGIDRGLWDLQNKADRQNDILVKYRELSVPPES</sequence>
<comment type="function">
    <text>May be involved in the biogenesis of curli organelles.</text>
</comment>
<comment type="subcellular location">
    <subcellularLocation>
        <location evidence="1">Cell membrane</location>
        <topology evidence="1">Lipid-anchor</topology>
    </subcellularLocation>
</comment>
<comment type="similarity">
    <text evidence="2">Belongs to the CsgG family.</text>
</comment>
<proteinExistence type="inferred from homology"/>
<dbReference type="EMBL" id="AJ002301">
    <property type="protein sequence ID" value="CAA05312.1"/>
    <property type="molecule type" value="Genomic_DNA"/>
</dbReference>
<dbReference type="EMBL" id="AE006468">
    <property type="protein sequence ID" value="AAL20069.1"/>
    <property type="molecule type" value="Genomic_DNA"/>
</dbReference>
<dbReference type="RefSeq" id="NP_460110.1">
    <property type="nucleotide sequence ID" value="NC_003197.2"/>
</dbReference>
<dbReference type="RefSeq" id="WP_001137620.1">
    <property type="nucleotide sequence ID" value="NC_003197.2"/>
</dbReference>
<dbReference type="SMR" id="P0A204"/>
<dbReference type="STRING" id="99287.STM1139"/>
<dbReference type="PaxDb" id="99287-STM1139"/>
<dbReference type="GeneID" id="1252657"/>
<dbReference type="KEGG" id="stm:STM1139"/>
<dbReference type="PATRIC" id="fig|99287.12.peg.1206"/>
<dbReference type="HOGENOM" id="CLU_056911_0_0_6"/>
<dbReference type="OMA" id="TQGAASM"/>
<dbReference type="PhylomeDB" id="P0A204"/>
<dbReference type="BioCyc" id="SENT99287:STM1139-MONOMER"/>
<dbReference type="Proteomes" id="UP000001014">
    <property type="component" value="Chromosome"/>
</dbReference>
<dbReference type="GO" id="GO:0030288">
    <property type="term" value="C:outer membrane-bounded periplasmic space"/>
    <property type="evidence" value="ECO:0007669"/>
    <property type="project" value="InterPro"/>
</dbReference>
<dbReference type="GO" id="GO:0005886">
    <property type="term" value="C:plasma membrane"/>
    <property type="evidence" value="ECO:0007669"/>
    <property type="project" value="UniProtKB-SubCell"/>
</dbReference>
<dbReference type="FunFam" id="3.40.50.10610:FF:000001">
    <property type="entry name" value="Curli production assembly/transport component CsgG"/>
    <property type="match status" value="1"/>
</dbReference>
<dbReference type="FunFam" id="3.40.50.10610:FF:000003">
    <property type="entry name" value="Curli production assembly/transport component CsgG"/>
    <property type="match status" value="1"/>
</dbReference>
<dbReference type="Gene3D" id="3.40.50.10610">
    <property type="entry name" value="ABC-type transport auxiliary lipoprotein component"/>
    <property type="match status" value="2"/>
</dbReference>
<dbReference type="InterPro" id="IPR005534">
    <property type="entry name" value="Curli_assmbl/transp-comp_CsgG"/>
</dbReference>
<dbReference type="NCBIfam" id="NF011731">
    <property type="entry name" value="PRK15184.1"/>
    <property type="match status" value="1"/>
</dbReference>
<dbReference type="PANTHER" id="PTHR41164">
    <property type="entry name" value="CURLI PRODUCTION ASSEMBLY/TRANSPORT COMPONENT CSGG"/>
    <property type="match status" value="1"/>
</dbReference>
<dbReference type="PANTHER" id="PTHR41164:SF1">
    <property type="entry name" value="CURLI PRODUCTION ASSEMBLY_TRANSPORT COMPONENT CSGG"/>
    <property type="match status" value="1"/>
</dbReference>
<dbReference type="Pfam" id="PF03783">
    <property type="entry name" value="CsgG"/>
    <property type="match status" value="1"/>
</dbReference>
<dbReference type="PROSITE" id="PS51257">
    <property type="entry name" value="PROKAR_LIPOPROTEIN"/>
    <property type="match status" value="1"/>
</dbReference>
<protein>
    <recommendedName>
        <fullName>Curli production assembly/transport component CsgG</fullName>
    </recommendedName>
</protein>
<evidence type="ECO:0000255" key="1">
    <source>
        <dbReference type="PROSITE-ProRule" id="PRU00303"/>
    </source>
</evidence>
<evidence type="ECO:0000305" key="2"/>
<reference key="1">
    <citation type="journal article" date="1998" name="J. Bacteriol.">
        <title>Curli fibers are highly conserved between Salmonella typhimurium and Escherichia coli with respect to operon structure and regulation.</title>
        <authorList>
            <person name="Romling U."/>
            <person name="Bian Z."/>
            <person name="Hammar M."/>
            <person name="Sierralta W.D."/>
            <person name="Normark S."/>
        </authorList>
    </citation>
    <scope>NUCLEOTIDE SEQUENCE [GENOMIC DNA]</scope>
    <source>
        <strain>SR-11</strain>
    </source>
</reference>
<reference key="2">
    <citation type="journal article" date="2001" name="Nature">
        <title>Complete genome sequence of Salmonella enterica serovar Typhimurium LT2.</title>
        <authorList>
            <person name="McClelland M."/>
            <person name="Sanderson K.E."/>
            <person name="Spieth J."/>
            <person name="Clifton S.W."/>
            <person name="Latreille P."/>
            <person name="Courtney L."/>
            <person name="Porwollik S."/>
            <person name="Ali J."/>
            <person name="Dante M."/>
            <person name="Du F."/>
            <person name="Hou S."/>
            <person name="Layman D."/>
            <person name="Leonard S."/>
            <person name="Nguyen C."/>
            <person name="Scott K."/>
            <person name="Holmes A."/>
            <person name="Grewal N."/>
            <person name="Mulvaney E."/>
            <person name="Ryan E."/>
            <person name="Sun H."/>
            <person name="Florea L."/>
            <person name="Miller W."/>
            <person name="Stoneking T."/>
            <person name="Nhan M."/>
            <person name="Waterston R."/>
            <person name="Wilson R.K."/>
        </authorList>
    </citation>
    <scope>NUCLEOTIDE SEQUENCE [LARGE SCALE GENOMIC DNA]</scope>
    <source>
        <strain>LT2 / SGSC1412 / ATCC 700720</strain>
    </source>
</reference>
<organism>
    <name type="scientific">Salmonella typhimurium (strain LT2 / SGSC1412 / ATCC 700720)</name>
    <dbReference type="NCBI Taxonomy" id="99287"/>
    <lineage>
        <taxon>Bacteria</taxon>
        <taxon>Pseudomonadati</taxon>
        <taxon>Pseudomonadota</taxon>
        <taxon>Gammaproteobacteria</taxon>
        <taxon>Enterobacterales</taxon>
        <taxon>Enterobacteriaceae</taxon>
        <taxon>Salmonella</taxon>
    </lineage>
</organism>
<gene>
    <name type="primary">csgG</name>
    <name type="ordered locus">STM1139</name>
</gene>
<name>CSGG_SALTY</name>
<feature type="signal peptide" evidence="1">
    <location>
        <begin position="1"/>
        <end position="15"/>
    </location>
</feature>
<feature type="chain" id="PRO_0000021024" description="Curli production assembly/transport component CsgG">
    <location>
        <begin position="16"/>
        <end position="277"/>
    </location>
</feature>
<feature type="lipid moiety-binding region" description="N-palmitoyl cysteine" evidence="1">
    <location>
        <position position="16"/>
    </location>
</feature>
<feature type="lipid moiety-binding region" description="S-diacylglycerol cysteine" evidence="1">
    <location>
        <position position="16"/>
    </location>
</feature>
<accession>P0A204</accession>
<accession>O54291</accession>